<sequence length="176" mass="20533">MDSQVRQNFHRDCEAAINRMVNMELYASYTYLSMAFYFDRDDIALHNVAKFFKEQSHEEREHAEKLMKDQNKRGGRIVLQDVKKPERDEWGNTLEAMQAALQLEKTVNQALLDLHKVGSDKVDPHLCDFLETEYLEEQVKSIKQLGDYITNLKRLGLPQNGMGEYLFDKHTMGESS</sequence>
<reference key="1">
    <citation type="journal article" date="1987" name="J. Biol. Chem.">
        <title>Differences in the regulation of messenger RNA for housekeeping and specialized-cell ferritin. A comparison of three distinct ferritin complementary DNAs, the corresponding subunits, and identification of the first processed in amphibia.</title>
        <authorList>
            <person name="Dickey L.F."/>
            <person name="Sreedharan S."/>
            <person name="Theil E.C."/>
            <person name="Didsbury J.R."/>
            <person name="Wang Y.-H."/>
            <person name="Kaufman R.E."/>
        </authorList>
    </citation>
    <scope>NUCLEOTIDE SEQUENCE [MRNA]</scope>
</reference>
<reference key="2">
    <citation type="journal article" date="1986" name="J. Biol. Chem.">
        <title>Multiple red cell ferritin mRNAs, which code for an abundant protein in the embryonic cell type, analyzed by cDNA sequence and by primer extension of the 5'-untranslated regions.</title>
        <authorList>
            <person name="Didsbury J.R."/>
            <person name="Theil E.C."/>
            <person name="Kaufman R.E."/>
            <person name="Dickey L.F."/>
        </authorList>
    </citation>
    <scope>NUCLEOTIDE SEQUENCE [MRNA]</scope>
    <source>
        <tissue>Erythrocyte</tissue>
    </source>
</reference>
<reference key="3">
    <citation type="journal article" date="1998" name="J. Biol. Chem.">
        <title>Localized unfolding at the junction of three ferritin subunits. A mechanism for iron release?</title>
        <authorList>
            <person name="Takagi H."/>
            <person name="Shi D."/>
            <person name="Ha Y."/>
            <person name="Allewell N.M."/>
            <person name="Theil E.C."/>
        </authorList>
    </citation>
    <scope>X-RAY CRYSTALLOGRAPHY (1.85 ANGSTROMS) OF MUTANT GLN-84</scope>
    <scope>FUNCTION</scope>
    <scope>MUTAGENESIS OF LEU-135</scope>
</reference>
<protein>
    <recommendedName>
        <fullName>Ferritin, higher subunit</fullName>
        <shortName>Ferritin H</shortName>
        <ecNumber>1.16.3.1</ecNumber>
    </recommendedName>
</protein>
<dbReference type="EC" id="1.16.3.1"/>
<dbReference type="EMBL" id="M15655">
    <property type="protein sequence ID" value="AAA49523.1"/>
    <property type="molecule type" value="mRNA"/>
</dbReference>
<dbReference type="EMBL" id="M12120">
    <property type="protein sequence ID" value="AAA49532.1"/>
    <property type="molecule type" value="mRNA"/>
</dbReference>
<dbReference type="PIR" id="A25627">
    <property type="entry name" value="FRFGL"/>
</dbReference>
<dbReference type="PIR" id="A27805">
    <property type="entry name" value="A27805"/>
</dbReference>
<dbReference type="PDB" id="1BG7">
    <property type="method" value="X-ray"/>
    <property type="resolution" value="1.85 A"/>
    <property type="chains" value="A=1-176"/>
</dbReference>
<dbReference type="PDBsum" id="1BG7"/>
<dbReference type="SMR" id="P07229"/>
<dbReference type="SABIO-RK" id="P07229"/>
<dbReference type="EvolutionaryTrace" id="P07229"/>
<dbReference type="GO" id="GO:0005737">
    <property type="term" value="C:cytoplasm"/>
    <property type="evidence" value="ECO:0007669"/>
    <property type="project" value="TreeGrafter"/>
</dbReference>
<dbReference type="GO" id="GO:0008199">
    <property type="term" value="F:ferric iron binding"/>
    <property type="evidence" value="ECO:0007669"/>
    <property type="project" value="InterPro"/>
</dbReference>
<dbReference type="GO" id="GO:0008198">
    <property type="term" value="F:ferrous iron binding"/>
    <property type="evidence" value="ECO:0007669"/>
    <property type="project" value="TreeGrafter"/>
</dbReference>
<dbReference type="GO" id="GO:0004322">
    <property type="term" value="F:ferroxidase activity"/>
    <property type="evidence" value="ECO:0007669"/>
    <property type="project" value="UniProtKB-EC"/>
</dbReference>
<dbReference type="GO" id="GO:0006879">
    <property type="term" value="P:intracellular iron ion homeostasis"/>
    <property type="evidence" value="ECO:0007669"/>
    <property type="project" value="UniProtKB-KW"/>
</dbReference>
<dbReference type="GO" id="GO:0006826">
    <property type="term" value="P:iron ion transport"/>
    <property type="evidence" value="ECO:0007669"/>
    <property type="project" value="InterPro"/>
</dbReference>
<dbReference type="CDD" id="cd01056">
    <property type="entry name" value="Euk_Ferritin"/>
    <property type="match status" value="1"/>
</dbReference>
<dbReference type="FunFam" id="1.20.1260.10:FF:000002">
    <property type="entry name" value="Ferritin, mitochondrial"/>
    <property type="match status" value="1"/>
</dbReference>
<dbReference type="Gene3D" id="1.20.1260.10">
    <property type="match status" value="1"/>
</dbReference>
<dbReference type="InterPro" id="IPR001519">
    <property type="entry name" value="Ferritin"/>
</dbReference>
<dbReference type="InterPro" id="IPR012347">
    <property type="entry name" value="Ferritin-like"/>
</dbReference>
<dbReference type="InterPro" id="IPR009040">
    <property type="entry name" value="Ferritin-like_diiron"/>
</dbReference>
<dbReference type="InterPro" id="IPR009078">
    <property type="entry name" value="Ferritin-like_SF"/>
</dbReference>
<dbReference type="InterPro" id="IPR014034">
    <property type="entry name" value="Ferritin_CS"/>
</dbReference>
<dbReference type="InterPro" id="IPR008331">
    <property type="entry name" value="Ferritin_DPS_dom"/>
</dbReference>
<dbReference type="PANTHER" id="PTHR11431">
    <property type="entry name" value="FERRITIN"/>
    <property type="match status" value="1"/>
</dbReference>
<dbReference type="PANTHER" id="PTHR11431:SF54">
    <property type="entry name" value="FERRITIN"/>
    <property type="match status" value="1"/>
</dbReference>
<dbReference type="Pfam" id="PF00210">
    <property type="entry name" value="Ferritin"/>
    <property type="match status" value="1"/>
</dbReference>
<dbReference type="SUPFAM" id="SSF47240">
    <property type="entry name" value="Ferritin-like"/>
    <property type="match status" value="1"/>
</dbReference>
<dbReference type="PROSITE" id="PS00540">
    <property type="entry name" value="FERRITIN_1"/>
    <property type="match status" value="1"/>
</dbReference>
<dbReference type="PROSITE" id="PS00204">
    <property type="entry name" value="FERRITIN_2"/>
    <property type="match status" value="1"/>
</dbReference>
<dbReference type="PROSITE" id="PS50905">
    <property type="entry name" value="FERRITIN_LIKE"/>
    <property type="match status" value="1"/>
</dbReference>
<proteinExistence type="evidence at protein level"/>
<organism>
    <name type="scientific">Aquarana catesbeiana</name>
    <name type="common">American bullfrog</name>
    <name type="synonym">Rana catesbeiana</name>
    <dbReference type="NCBI Taxonomy" id="8400"/>
    <lineage>
        <taxon>Eukaryota</taxon>
        <taxon>Metazoa</taxon>
        <taxon>Chordata</taxon>
        <taxon>Craniata</taxon>
        <taxon>Vertebrata</taxon>
        <taxon>Euteleostomi</taxon>
        <taxon>Amphibia</taxon>
        <taxon>Batrachia</taxon>
        <taxon>Anura</taxon>
        <taxon>Neobatrachia</taxon>
        <taxon>Ranoidea</taxon>
        <taxon>Ranidae</taxon>
        <taxon>Aquarana</taxon>
    </lineage>
</organism>
<name>FRI1_AQUCT</name>
<keyword id="KW-0002">3D-structure</keyword>
<keyword id="KW-0408">Iron</keyword>
<keyword id="KW-0409">Iron storage</keyword>
<keyword id="KW-0479">Metal-binding</keyword>
<keyword id="KW-0560">Oxidoreductase</keyword>
<comment type="function">
    <text evidence="3">Stores iron in a soluble, non-toxic, readily available form. Important for iron homeostasis. Has ferroxidase activity. Iron is taken up in the ferrous form and deposited as ferric hydroxides after oxidation.</text>
</comment>
<comment type="catalytic activity">
    <reaction>
        <text>4 Fe(2+) + O2 + 4 H(+) = 4 Fe(3+) + 2 H2O</text>
        <dbReference type="Rhea" id="RHEA:11148"/>
        <dbReference type="ChEBI" id="CHEBI:15377"/>
        <dbReference type="ChEBI" id="CHEBI:15378"/>
        <dbReference type="ChEBI" id="CHEBI:15379"/>
        <dbReference type="ChEBI" id="CHEBI:29033"/>
        <dbReference type="ChEBI" id="CHEBI:29034"/>
        <dbReference type="EC" id="1.16.3.1"/>
    </reaction>
</comment>
<comment type="subunit">
    <text>Oligomer of 24 subunits. The functional molecule is roughly spherical and contains a central cavity into which the polymeric mineral iron core is deposited.</text>
</comment>
<comment type="miscellaneous">
    <text>There are three types of ferritin subunits in amphibia: L, M and H chains. M and H chains are fast mineralizing; the L chain is very slow mineralizing.</text>
</comment>
<comment type="similarity">
    <text evidence="4">Belongs to the ferritin family.</text>
</comment>
<feature type="initiator methionine" description="Removed" evidence="1">
    <location>
        <position position="1"/>
    </location>
</feature>
<feature type="chain" id="PRO_0000201072" description="Ferritin, higher subunit">
    <location>
        <begin position="2"/>
        <end position="176"/>
    </location>
</feature>
<feature type="domain" description="Ferritin-like diiron" evidence="2">
    <location>
        <begin position="7"/>
        <end position="156"/>
    </location>
</feature>
<feature type="binding site" evidence="2">
    <location>
        <position position="24"/>
    </location>
    <ligand>
        <name>Fe cation</name>
        <dbReference type="ChEBI" id="CHEBI:24875"/>
        <label>1</label>
    </ligand>
</feature>
<feature type="binding site" evidence="2">
    <location>
        <position position="58"/>
    </location>
    <ligand>
        <name>Fe cation</name>
        <dbReference type="ChEBI" id="CHEBI:24875"/>
    </ligand>
</feature>
<feature type="binding site" evidence="2">
    <location>
        <position position="59"/>
    </location>
    <ligand>
        <name>Fe cation</name>
        <dbReference type="ChEBI" id="CHEBI:24875"/>
        <label>1</label>
    </ligand>
</feature>
<feature type="binding site" evidence="2">
    <location>
        <position position="59"/>
    </location>
    <ligand>
        <name>Fe cation</name>
        <dbReference type="ChEBI" id="CHEBI:24875"/>
        <label>2</label>
    </ligand>
</feature>
<feature type="binding site" evidence="2">
    <location>
        <position position="62"/>
    </location>
    <ligand>
        <name>Fe cation</name>
        <dbReference type="ChEBI" id="CHEBI:24875"/>
        <label>1</label>
    </ligand>
</feature>
<feature type="binding site" evidence="2">
    <location>
        <position position="104"/>
    </location>
    <ligand>
        <name>Fe cation</name>
        <dbReference type="ChEBI" id="CHEBI:24875"/>
        <label>2</label>
    </ligand>
</feature>
<feature type="binding site" evidence="2">
    <location>
        <position position="138"/>
    </location>
    <ligand>
        <name>Fe cation</name>
        <dbReference type="ChEBI" id="CHEBI:24875"/>
        <label>2</label>
    </ligand>
</feature>
<feature type="mutagenesis site" description="Improves crystallization.">
    <original>K</original>
    <variation>Q</variation>
    <location>
        <position position="83"/>
    </location>
</feature>
<feature type="mutagenesis site" description="Reduces initial rate of ferroxidation and accelerates iron release." evidence="3">
    <original>L</original>
    <variation>P</variation>
    <location>
        <position position="135"/>
    </location>
</feature>
<feature type="sequence conflict" description="In Ref. 2; AAA49532." evidence="4" ref="2">
    <original>K</original>
    <variation>E</variation>
    <location>
        <position position="83"/>
    </location>
</feature>
<feature type="helix" evidence="5">
    <location>
        <begin position="11"/>
        <end position="38"/>
    </location>
</feature>
<feature type="turn" evidence="5">
    <location>
        <begin position="41"/>
        <end position="43"/>
    </location>
</feature>
<feature type="helix" evidence="5">
    <location>
        <begin position="46"/>
        <end position="73"/>
    </location>
</feature>
<feature type="helix" evidence="5">
    <location>
        <begin position="93"/>
        <end position="113"/>
    </location>
</feature>
<feature type="helix" evidence="5">
    <location>
        <begin position="138"/>
        <end position="154"/>
    </location>
</feature>
<feature type="turn" evidence="5">
    <location>
        <begin position="155"/>
        <end position="159"/>
    </location>
</feature>
<feature type="helix" evidence="5">
    <location>
        <begin position="161"/>
        <end position="170"/>
    </location>
</feature>
<feature type="turn" evidence="5">
    <location>
        <begin position="171"/>
        <end position="173"/>
    </location>
</feature>
<evidence type="ECO:0000250" key="1"/>
<evidence type="ECO:0000255" key="2">
    <source>
        <dbReference type="PROSITE-ProRule" id="PRU00085"/>
    </source>
</evidence>
<evidence type="ECO:0000269" key="3">
    <source>
    </source>
</evidence>
<evidence type="ECO:0000305" key="4"/>
<evidence type="ECO:0007829" key="5">
    <source>
        <dbReference type="PDB" id="1BG7"/>
    </source>
</evidence>
<accession>P07229</accession>